<proteinExistence type="inferred from homology"/>
<comment type="similarity">
    <text evidence="1">Belongs to the bacterial ribosomal protein bL35 family.</text>
</comment>
<accession>Q2NIG5</accession>
<evidence type="ECO:0000255" key="1">
    <source>
        <dbReference type="HAMAP-Rule" id="MF_00514"/>
    </source>
</evidence>
<evidence type="ECO:0000305" key="2"/>
<sequence length="68" mass="7885">MIKVIKKKSHSGLKKRIKITKKKKLLRGHAYKNHLAASKTTKQNRQLRGVTCVKLCDYNRIKTLIRGL</sequence>
<dbReference type="EMBL" id="CP000061">
    <property type="protein sequence ID" value="ABC65778.1"/>
    <property type="molecule type" value="Genomic_DNA"/>
</dbReference>
<dbReference type="RefSeq" id="WP_011412939.1">
    <property type="nucleotide sequence ID" value="NC_007716.1"/>
</dbReference>
<dbReference type="SMR" id="Q2NIG5"/>
<dbReference type="STRING" id="322098.AYWB_661"/>
<dbReference type="KEGG" id="ayw:AYWB_661"/>
<dbReference type="eggNOG" id="COG0291">
    <property type="taxonomic scope" value="Bacteria"/>
</dbReference>
<dbReference type="HOGENOM" id="CLU_169643_3_1_14"/>
<dbReference type="OrthoDB" id="47476at2"/>
<dbReference type="PhylomeDB" id="Q2NIG5"/>
<dbReference type="Proteomes" id="UP000001934">
    <property type="component" value="Chromosome"/>
</dbReference>
<dbReference type="GO" id="GO:0022625">
    <property type="term" value="C:cytosolic large ribosomal subunit"/>
    <property type="evidence" value="ECO:0007669"/>
    <property type="project" value="TreeGrafter"/>
</dbReference>
<dbReference type="GO" id="GO:0003735">
    <property type="term" value="F:structural constituent of ribosome"/>
    <property type="evidence" value="ECO:0007669"/>
    <property type="project" value="InterPro"/>
</dbReference>
<dbReference type="GO" id="GO:0006412">
    <property type="term" value="P:translation"/>
    <property type="evidence" value="ECO:0007669"/>
    <property type="project" value="UniProtKB-UniRule"/>
</dbReference>
<dbReference type="Gene3D" id="4.10.410.60">
    <property type="match status" value="1"/>
</dbReference>
<dbReference type="HAMAP" id="MF_00514">
    <property type="entry name" value="Ribosomal_bL35"/>
    <property type="match status" value="1"/>
</dbReference>
<dbReference type="InterPro" id="IPR001706">
    <property type="entry name" value="Ribosomal_bL35"/>
</dbReference>
<dbReference type="InterPro" id="IPR021137">
    <property type="entry name" value="Ribosomal_bL35-like"/>
</dbReference>
<dbReference type="InterPro" id="IPR018265">
    <property type="entry name" value="Ribosomal_bL35_CS"/>
</dbReference>
<dbReference type="InterPro" id="IPR037229">
    <property type="entry name" value="Ribosomal_bL35_sf"/>
</dbReference>
<dbReference type="NCBIfam" id="TIGR00001">
    <property type="entry name" value="rpmI_bact"/>
    <property type="match status" value="1"/>
</dbReference>
<dbReference type="PANTHER" id="PTHR33343">
    <property type="entry name" value="54S RIBOSOMAL PROTEIN BL35M"/>
    <property type="match status" value="1"/>
</dbReference>
<dbReference type="PANTHER" id="PTHR33343:SF1">
    <property type="entry name" value="LARGE RIBOSOMAL SUBUNIT PROTEIN BL35M"/>
    <property type="match status" value="1"/>
</dbReference>
<dbReference type="Pfam" id="PF01632">
    <property type="entry name" value="Ribosomal_L35p"/>
    <property type="match status" value="1"/>
</dbReference>
<dbReference type="PRINTS" id="PR00064">
    <property type="entry name" value="RIBOSOMALL35"/>
</dbReference>
<dbReference type="SUPFAM" id="SSF143034">
    <property type="entry name" value="L35p-like"/>
    <property type="match status" value="1"/>
</dbReference>
<dbReference type="PROSITE" id="PS00936">
    <property type="entry name" value="RIBOSOMAL_L35"/>
    <property type="match status" value="1"/>
</dbReference>
<keyword id="KW-0687">Ribonucleoprotein</keyword>
<keyword id="KW-0689">Ribosomal protein</keyword>
<reference key="1">
    <citation type="journal article" date="2006" name="J. Bacteriol.">
        <title>Living with genome instability: the adaptation of phytoplasmas to diverse environments of their insect and plant hosts.</title>
        <authorList>
            <person name="Bai X."/>
            <person name="Zhang J."/>
            <person name="Ewing A."/>
            <person name="Miller S.A."/>
            <person name="Jancso Radek A."/>
            <person name="Shevchenko D.V."/>
            <person name="Tsukerman K."/>
            <person name="Walunas T."/>
            <person name="Lapidus A."/>
            <person name="Campbell J.W."/>
            <person name="Hogenhout S.A."/>
        </authorList>
    </citation>
    <scope>NUCLEOTIDE SEQUENCE [LARGE SCALE GENOMIC DNA]</scope>
    <source>
        <strain>AYWB</strain>
    </source>
</reference>
<gene>
    <name evidence="1" type="primary">rpmI</name>
    <name type="ordered locus">AYWB_661</name>
</gene>
<organism>
    <name type="scientific">Aster yellows witches'-broom phytoplasma (strain AYWB)</name>
    <dbReference type="NCBI Taxonomy" id="322098"/>
    <lineage>
        <taxon>Bacteria</taxon>
        <taxon>Bacillati</taxon>
        <taxon>Mycoplasmatota</taxon>
        <taxon>Mollicutes</taxon>
        <taxon>Acholeplasmatales</taxon>
        <taxon>Acholeplasmataceae</taxon>
        <taxon>Candidatus Phytoplasma</taxon>
        <taxon>16SrI (Aster yellows group)</taxon>
    </lineage>
</organism>
<protein>
    <recommendedName>
        <fullName evidence="1">Large ribosomal subunit protein bL35</fullName>
    </recommendedName>
    <alternativeName>
        <fullName evidence="2">50S ribosomal protein L35</fullName>
    </alternativeName>
</protein>
<feature type="chain" id="PRO_0000258633" description="Large ribosomal subunit protein bL35">
    <location>
        <begin position="1"/>
        <end position="68"/>
    </location>
</feature>
<name>RL35_AYWBP</name>